<accession>O56831</accession>
<keyword id="KW-1035">Host cytoplasm</keyword>
<keyword id="KW-1037">Host cytoskeleton</keyword>
<keyword id="KW-0945">Host-virus interaction</keyword>
<keyword id="KW-1090">Inhibition of host innate immune response by virus</keyword>
<keyword id="KW-1092">Inhibition of host IRF3 by virus</keyword>
<keyword id="KW-1093">Inhibition of host IRF7 by virus</keyword>
<keyword id="KW-1113">Inhibition of host RLR pathway by virus</keyword>
<keyword id="KW-0922">Interferon antiviral system evasion</keyword>
<keyword id="KW-0479">Metal-binding</keyword>
<keyword id="KW-0694">RNA-binding</keyword>
<keyword id="KW-0899">Viral immunoevasion</keyword>
<evidence type="ECO:0000255" key="1">
    <source>
        <dbReference type="HAMAP-Rule" id="MF_04088"/>
    </source>
</evidence>
<proteinExistence type="evidence at transcript level"/>
<dbReference type="EMBL" id="D78362">
    <property type="protein sequence ID" value="BAA24411.1"/>
    <property type="molecule type" value="mRNA"/>
</dbReference>
<dbReference type="GO" id="GO:0030430">
    <property type="term" value="C:host cell cytoplasm"/>
    <property type="evidence" value="ECO:0007669"/>
    <property type="project" value="UniProtKB-UniRule"/>
</dbReference>
<dbReference type="GO" id="GO:0044163">
    <property type="term" value="C:host cytoskeleton"/>
    <property type="evidence" value="ECO:0007669"/>
    <property type="project" value="UniProtKB-SubCell"/>
</dbReference>
<dbReference type="GO" id="GO:0046872">
    <property type="term" value="F:metal ion binding"/>
    <property type="evidence" value="ECO:0007669"/>
    <property type="project" value="UniProtKB-UniRule"/>
</dbReference>
<dbReference type="GO" id="GO:0003723">
    <property type="term" value="F:RNA binding"/>
    <property type="evidence" value="ECO:0007669"/>
    <property type="project" value="UniProtKB-UniRule"/>
</dbReference>
<dbReference type="GO" id="GO:0039548">
    <property type="term" value="P:symbiont-mediated suppression of host cytoplasmic pattern recognition receptor signaling pathway via inhibition of IRF3 activity"/>
    <property type="evidence" value="ECO:0007669"/>
    <property type="project" value="UniProtKB-UniRule"/>
</dbReference>
<dbReference type="GO" id="GO:0039557">
    <property type="term" value="P:symbiont-mediated suppression of host cytoplasmic pattern recognition receptor signaling pathway via inhibition of IRF7 activity"/>
    <property type="evidence" value="ECO:0007669"/>
    <property type="project" value="UniProtKB-UniRule"/>
</dbReference>
<dbReference type="HAMAP" id="MF_04088">
    <property type="entry name" value="ROTA_NSP1"/>
    <property type="match status" value="1"/>
</dbReference>
<dbReference type="InterPro" id="IPR002148">
    <property type="entry name" value="Rotavirus_NSP1"/>
</dbReference>
<dbReference type="Pfam" id="PF00981">
    <property type="entry name" value="Rota_NS53"/>
    <property type="match status" value="1"/>
</dbReference>
<organism>
    <name type="scientific">Rotavirus A (isolate RVA/Cat/Japan/FRV64/1989/G3P5B[3])</name>
    <name type="common">RV-A</name>
    <dbReference type="NCBI Taxonomy" id="39010"/>
    <lineage>
        <taxon>Viruses</taxon>
        <taxon>Riboviria</taxon>
        <taxon>Orthornavirae</taxon>
        <taxon>Duplornaviricota</taxon>
        <taxon>Resentoviricetes</taxon>
        <taxon>Reovirales</taxon>
        <taxon>Sedoreoviridae</taxon>
        <taxon>Rotavirus</taxon>
        <taxon>Feline rotavirus</taxon>
    </lineage>
</organism>
<feature type="chain" id="PRO_0000369066" description="Non-structural protein 1">
    <location>
        <begin position="1"/>
        <end position="492"/>
    </location>
</feature>
<feature type="region of interest" description="RNA-binding" evidence="1">
    <location>
        <begin position="1"/>
        <end position="81"/>
    </location>
</feature>
<feature type="region of interest" description="Zinc-binding domain" evidence="1">
    <location>
        <begin position="42"/>
        <end position="79"/>
    </location>
</feature>
<feature type="region of interest" description="Important for cytoskeleton localization" evidence="1">
    <location>
        <begin position="82"/>
        <end position="176"/>
    </location>
</feature>
<feature type="region of interest" description="Interaction with host IRF3" evidence="1">
    <location>
        <begin position="318"/>
        <end position="492"/>
    </location>
</feature>
<feature type="short sequence motif" description="pLxIS motif" evidence="1">
    <location>
        <begin position="483"/>
        <end position="486"/>
    </location>
</feature>
<reference key="1">
    <citation type="journal article" date="1997" name="J. Clin. Microbiol.">
        <title>Interspecies sharing of two distinct nonstructural protein 1 alleles among human and animal rotaviruses as revealed by dot blot hybridization.</title>
        <authorList>
            <person name="Fujiwara Y."/>
            <person name="Nakagomi O."/>
        </authorList>
    </citation>
    <scope>NUCLEOTIDE SEQUENCE [MRNA]</scope>
</reference>
<comment type="function">
    <text evidence="1">Plays a role in the inhibition of host innate immunity by inducing the degradation of key host factors required to activate interferon production such as IRF3, IRF5 or IRF7. Associates with components of cullin RING ligases (CRLs) including CUL1 or CUL3, which are essential multisubunit ubiquitination complexes, to modulate their activities.</text>
</comment>
<comment type="subunit">
    <text evidence="1">Interacts (via C-terminus) with host IRF3; this interaction leads to IRF3 degradation. Interacts with host IRF7; this interaction leads to IRF7 degradation. Interacts with host CUL1 and CUL3.</text>
</comment>
<comment type="subcellular location">
    <subcellularLocation>
        <location evidence="1">Host cytoplasm</location>
        <location evidence="1">Host cytoskeleton</location>
    </subcellularLocation>
</comment>
<comment type="domain">
    <text evidence="1">The integrity of the zinc-binding domain in NSP1 is important for degradation of host IRF3.</text>
</comment>
<comment type="domain">
    <text evidence="1">The pLxIS motif targets host IRF3 for degradation; however phosphorylation of NSP1 pLxIS motif is not required for its activity.</text>
</comment>
<comment type="similarity">
    <text evidence="1">Belongs to the rotavirus NSP1 family.</text>
</comment>
<name>NSP1_ROTF6</name>
<protein>
    <recommendedName>
        <fullName evidence="1">Non-structural protein 1</fullName>
        <shortName evidence="1">NSP1</shortName>
    </recommendedName>
    <alternativeName>
        <fullName evidence="1">NCVP2</fullName>
    </alternativeName>
    <alternativeName>
        <fullName evidence="1">Non-structural RNA-binding protein 53</fullName>
        <shortName evidence="1">NS53</shortName>
    </alternativeName>
</protein>
<sequence>MATFKDACFHYRKITKLNRELLRIGANSVWIPVSSNKIKGWCIECCQLTELTFCHGCSLAHVCQWCIQNKRCFLDNEPHLLKLRSFESPITKEKLQCIIDLYNLLFPINPGIINRFKKIVNQRKCRNEFEQSWYNQLLFPITLNAAVFKFHSREVYVFGLYEGSSSCIDLPYRIVNCIDLYDRLLLDQINFERMSSLPASLQSVYANKYFKLSRLPSMKLKQIYYSDFSKQNLINKCKIKSRIVLRNLTEFTWDSQVSLHNDVINNKEKILTALSTSSLKRFETHDLNLGRVKADIFELGHHCKPNYISSNHWQPASKVSQCRWCNVKYVFRNMDWKMESMYNELLSFIQACYKSNVNVGNCSSIESAYPLVKDMLWHSITKYIDQTIEKLFNVMNPVKVDGQQVISFHWQIDVALYIHIKMILKTETLPFAFTLNQFRSIIKGIVNQWYDVTELDYLPLCTEQTDKLVKLEEEGKISEEHELLISDSEDDD</sequence>
<organismHost>
    <name type="scientific">Felis catus</name>
    <name type="common">Cat</name>
    <name type="synonym">Felis silvestris catus</name>
    <dbReference type="NCBI Taxonomy" id="9685"/>
</organismHost>